<organism>
    <name type="scientific">Pseudomonas savastanoi pv. phaseolicola (strain 1448A / Race 6)</name>
    <name type="common">Pseudomonas syringae pv. phaseolicola (strain 1448A / Race 6)</name>
    <dbReference type="NCBI Taxonomy" id="264730"/>
    <lineage>
        <taxon>Bacteria</taxon>
        <taxon>Pseudomonadati</taxon>
        <taxon>Pseudomonadota</taxon>
        <taxon>Gammaproteobacteria</taxon>
        <taxon>Pseudomonadales</taxon>
        <taxon>Pseudomonadaceae</taxon>
        <taxon>Pseudomonas</taxon>
    </lineage>
</organism>
<sequence>MQAYQRDFIRFAIDRGVLRFGEFTLKSGRTSPYFFNAGLFNTGSALAQLGRFYAAAVVESGIAFDVLFGPAYKGIPLASATAVALAEHHDRDLPWCFNRKEAKAHGEGGSLVGSPLAGNVLIIDDVITAGTAIREVMQIIKDQSATAAGVLIALNRQERGNGELSAIQEVERDFGIPVVSIVSLNQVLEFLADDPQLKQHLPAVEAYRMQYGI</sequence>
<keyword id="KW-0328">Glycosyltransferase</keyword>
<keyword id="KW-0460">Magnesium</keyword>
<keyword id="KW-0665">Pyrimidine biosynthesis</keyword>
<keyword id="KW-0808">Transferase</keyword>
<evidence type="ECO:0000255" key="1">
    <source>
        <dbReference type="HAMAP-Rule" id="MF_01208"/>
    </source>
</evidence>
<feature type="chain" id="PRO_1000066270" description="Orotate phosphoribosyltransferase">
    <location>
        <begin position="1"/>
        <end position="213"/>
    </location>
</feature>
<feature type="binding site" description="in other chain" evidence="1">
    <location>
        <position position="26"/>
    </location>
    <ligand>
        <name>5-phospho-alpha-D-ribose 1-diphosphate</name>
        <dbReference type="ChEBI" id="CHEBI:58017"/>
        <note>ligand shared between dimeric partners</note>
    </ligand>
</feature>
<feature type="binding site" evidence="1">
    <location>
        <begin position="34"/>
        <end position="35"/>
    </location>
    <ligand>
        <name>orotate</name>
        <dbReference type="ChEBI" id="CHEBI:30839"/>
    </ligand>
</feature>
<feature type="binding site" description="in other chain" evidence="1">
    <location>
        <begin position="72"/>
        <end position="73"/>
    </location>
    <ligand>
        <name>5-phospho-alpha-D-ribose 1-diphosphate</name>
        <dbReference type="ChEBI" id="CHEBI:58017"/>
        <note>ligand shared between dimeric partners</note>
    </ligand>
</feature>
<feature type="binding site" evidence="1">
    <location>
        <position position="99"/>
    </location>
    <ligand>
        <name>5-phospho-alpha-D-ribose 1-diphosphate</name>
        <dbReference type="ChEBI" id="CHEBI:58017"/>
        <note>ligand shared between dimeric partners</note>
    </ligand>
</feature>
<feature type="binding site" description="in other chain" evidence="1">
    <location>
        <position position="100"/>
    </location>
    <ligand>
        <name>5-phospho-alpha-D-ribose 1-diphosphate</name>
        <dbReference type="ChEBI" id="CHEBI:58017"/>
        <note>ligand shared between dimeric partners</note>
    </ligand>
</feature>
<feature type="binding site" evidence="1">
    <location>
        <position position="103"/>
    </location>
    <ligand>
        <name>5-phospho-alpha-D-ribose 1-diphosphate</name>
        <dbReference type="ChEBI" id="CHEBI:58017"/>
        <note>ligand shared between dimeric partners</note>
    </ligand>
</feature>
<feature type="binding site" evidence="1">
    <location>
        <position position="105"/>
    </location>
    <ligand>
        <name>5-phospho-alpha-D-ribose 1-diphosphate</name>
        <dbReference type="ChEBI" id="CHEBI:58017"/>
        <note>ligand shared between dimeric partners</note>
    </ligand>
</feature>
<feature type="binding site" description="in other chain" evidence="1">
    <location>
        <begin position="124"/>
        <end position="132"/>
    </location>
    <ligand>
        <name>5-phospho-alpha-D-ribose 1-diphosphate</name>
        <dbReference type="ChEBI" id="CHEBI:58017"/>
        <note>ligand shared between dimeric partners</note>
    </ligand>
</feature>
<feature type="binding site" evidence="1">
    <location>
        <position position="128"/>
    </location>
    <ligand>
        <name>orotate</name>
        <dbReference type="ChEBI" id="CHEBI:30839"/>
    </ligand>
</feature>
<feature type="binding site" evidence="1">
    <location>
        <position position="156"/>
    </location>
    <ligand>
        <name>orotate</name>
        <dbReference type="ChEBI" id="CHEBI:30839"/>
    </ligand>
</feature>
<accession>Q48Q10</accession>
<proteinExistence type="inferred from homology"/>
<dbReference type="EC" id="2.4.2.10" evidence="1"/>
<dbReference type="EMBL" id="CP000058">
    <property type="protein sequence ID" value="AAZ36832.1"/>
    <property type="molecule type" value="Genomic_DNA"/>
</dbReference>
<dbReference type="RefSeq" id="WP_011167386.1">
    <property type="nucleotide sequence ID" value="NC_005773.3"/>
</dbReference>
<dbReference type="SMR" id="Q48Q10"/>
<dbReference type="KEGG" id="psp:PSPPH_0204"/>
<dbReference type="eggNOG" id="COG0461">
    <property type="taxonomic scope" value="Bacteria"/>
</dbReference>
<dbReference type="HOGENOM" id="CLU_074878_0_1_6"/>
<dbReference type="UniPathway" id="UPA00070">
    <property type="reaction ID" value="UER00119"/>
</dbReference>
<dbReference type="Proteomes" id="UP000000551">
    <property type="component" value="Chromosome"/>
</dbReference>
<dbReference type="GO" id="GO:0005737">
    <property type="term" value="C:cytoplasm"/>
    <property type="evidence" value="ECO:0007669"/>
    <property type="project" value="TreeGrafter"/>
</dbReference>
<dbReference type="GO" id="GO:0000287">
    <property type="term" value="F:magnesium ion binding"/>
    <property type="evidence" value="ECO:0007669"/>
    <property type="project" value="UniProtKB-UniRule"/>
</dbReference>
<dbReference type="GO" id="GO:0004588">
    <property type="term" value="F:orotate phosphoribosyltransferase activity"/>
    <property type="evidence" value="ECO:0007669"/>
    <property type="project" value="UniProtKB-UniRule"/>
</dbReference>
<dbReference type="GO" id="GO:0006207">
    <property type="term" value="P:'de novo' pyrimidine nucleobase biosynthetic process"/>
    <property type="evidence" value="ECO:0007669"/>
    <property type="project" value="TreeGrafter"/>
</dbReference>
<dbReference type="GO" id="GO:0044205">
    <property type="term" value="P:'de novo' UMP biosynthetic process"/>
    <property type="evidence" value="ECO:0007669"/>
    <property type="project" value="UniProtKB-UniRule"/>
</dbReference>
<dbReference type="GO" id="GO:0046132">
    <property type="term" value="P:pyrimidine ribonucleoside biosynthetic process"/>
    <property type="evidence" value="ECO:0007669"/>
    <property type="project" value="TreeGrafter"/>
</dbReference>
<dbReference type="CDD" id="cd06223">
    <property type="entry name" value="PRTases_typeI"/>
    <property type="match status" value="1"/>
</dbReference>
<dbReference type="FunFam" id="3.40.50.2020:FF:000008">
    <property type="entry name" value="Orotate phosphoribosyltransferase"/>
    <property type="match status" value="1"/>
</dbReference>
<dbReference type="Gene3D" id="3.40.50.2020">
    <property type="match status" value="1"/>
</dbReference>
<dbReference type="HAMAP" id="MF_01208">
    <property type="entry name" value="PyrE"/>
    <property type="match status" value="1"/>
</dbReference>
<dbReference type="InterPro" id="IPR023031">
    <property type="entry name" value="OPRT"/>
</dbReference>
<dbReference type="InterPro" id="IPR004467">
    <property type="entry name" value="Or_phspho_trans_dom"/>
</dbReference>
<dbReference type="InterPro" id="IPR000836">
    <property type="entry name" value="PRibTrfase_dom"/>
</dbReference>
<dbReference type="InterPro" id="IPR029057">
    <property type="entry name" value="PRTase-like"/>
</dbReference>
<dbReference type="NCBIfam" id="TIGR00336">
    <property type="entry name" value="pyrE"/>
    <property type="match status" value="1"/>
</dbReference>
<dbReference type="PANTHER" id="PTHR46683">
    <property type="entry name" value="OROTATE PHOSPHORIBOSYLTRANSFERASE 1-RELATED"/>
    <property type="match status" value="1"/>
</dbReference>
<dbReference type="PANTHER" id="PTHR46683:SF1">
    <property type="entry name" value="OROTATE PHOSPHORIBOSYLTRANSFERASE 1-RELATED"/>
    <property type="match status" value="1"/>
</dbReference>
<dbReference type="Pfam" id="PF00156">
    <property type="entry name" value="Pribosyltran"/>
    <property type="match status" value="1"/>
</dbReference>
<dbReference type="SUPFAM" id="SSF53271">
    <property type="entry name" value="PRTase-like"/>
    <property type="match status" value="1"/>
</dbReference>
<dbReference type="PROSITE" id="PS00103">
    <property type="entry name" value="PUR_PYR_PR_TRANSFER"/>
    <property type="match status" value="1"/>
</dbReference>
<reference key="1">
    <citation type="journal article" date="2005" name="J. Bacteriol.">
        <title>Whole-genome sequence analysis of Pseudomonas syringae pv. phaseolicola 1448A reveals divergence among pathovars in genes involved in virulence and transposition.</title>
        <authorList>
            <person name="Joardar V."/>
            <person name="Lindeberg M."/>
            <person name="Jackson R.W."/>
            <person name="Selengut J."/>
            <person name="Dodson R."/>
            <person name="Brinkac L.M."/>
            <person name="Daugherty S.C."/>
            <person name="DeBoy R.T."/>
            <person name="Durkin A.S."/>
            <person name="Gwinn Giglio M."/>
            <person name="Madupu R."/>
            <person name="Nelson W.C."/>
            <person name="Rosovitz M.J."/>
            <person name="Sullivan S.A."/>
            <person name="Crabtree J."/>
            <person name="Creasy T."/>
            <person name="Davidsen T.M."/>
            <person name="Haft D.H."/>
            <person name="Zafar N."/>
            <person name="Zhou L."/>
            <person name="Halpin R."/>
            <person name="Holley T."/>
            <person name="Khouri H.M."/>
            <person name="Feldblyum T.V."/>
            <person name="White O."/>
            <person name="Fraser C.M."/>
            <person name="Chatterjee A.K."/>
            <person name="Cartinhour S."/>
            <person name="Schneider D."/>
            <person name="Mansfield J.W."/>
            <person name="Collmer A."/>
            <person name="Buell R."/>
        </authorList>
    </citation>
    <scope>NUCLEOTIDE SEQUENCE [LARGE SCALE GENOMIC DNA]</scope>
    <source>
        <strain>1448A / Race 6</strain>
    </source>
</reference>
<gene>
    <name evidence="1" type="primary">pyrE</name>
    <name type="ordered locus">PSPPH_0204</name>
</gene>
<name>PYRE_PSE14</name>
<comment type="function">
    <text evidence="1">Catalyzes the transfer of a ribosyl phosphate group from 5-phosphoribose 1-diphosphate to orotate, leading to the formation of orotidine monophosphate (OMP).</text>
</comment>
<comment type="catalytic activity">
    <reaction evidence="1">
        <text>orotidine 5'-phosphate + diphosphate = orotate + 5-phospho-alpha-D-ribose 1-diphosphate</text>
        <dbReference type="Rhea" id="RHEA:10380"/>
        <dbReference type="ChEBI" id="CHEBI:30839"/>
        <dbReference type="ChEBI" id="CHEBI:33019"/>
        <dbReference type="ChEBI" id="CHEBI:57538"/>
        <dbReference type="ChEBI" id="CHEBI:58017"/>
        <dbReference type="EC" id="2.4.2.10"/>
    </reaction>
</comment>
<comment type="cofactor">
    <cofactor evidence="1">
        <name>Mg(2+)</name>
        <dbReference type="ChEBI" id="CHEBI:18420"/>
    </cofactor>
</comment>
<comment type="pathway">
    <text evidence="1">Pyrimidine metabolism; UMP biosynthesis via de novo pathway; UMP from orotate: step 1/2.</text>
</comment>
<comment type="subunit">
    <text evidence="1">Homodimer.</text>
</comment>
<comment type="similarity">
    <text evidence="1">Belongs to the purine/pyrimidine phosphoribosyltransferase family. PyrE subfamily.</text>
</comment>
<protein>
    <recommendedName>
        <fullName evidence="1">Orotate phosphoribosyltransferase</fullName>
        <shortName evidence="1">OPRT</shortName>
        <shortName evidence="1">OPRTase</shortName>
        <ecNumber evidence="1">2.4.2.10</ecNumber>
    </recommendedName>
</protein>